<keyword id="KW-0066">ATP synthesis</keyword>
<keyword id="KW-1003">Cell membrane</keyword>
<keyword id="KW-0139">CF(1)</keyword>
<keyword id="KW-0375">Hydrogen ion transport</keyword>
<keyword id="KW-0406">Ion transport</keyword>
<keyword id="KW-0472">Membrane</keyword>
<keyword id="KW-0813">Transport</keyword>
<protein>
    <recommendedName>
        <fullName evidence="1">ATP synthase gamma chain</fullName>
    </recommendedName>
    <alternativeName>
        <fullName evidence="1">ATP synthase F1 sector gamma subunit</fullName>
    </alternativeName>
    <alternativeName>
        <fullName evidence="1">F-ATPase gamma subunit</fullName>
    </alternativeName>
</protein>
<organism>
    <name type="scientific">Caldicellulosiruptor saccharolyticus (strain ATCC 43494 / DSM 8903 / Tp8T 6331)</name>
    <dbReference type="NCBI Taxonomy" id="351627"/>
    <lineage>
        <taxon>Bacteria</taxon>
        <taxon>Bacillati</taxon>
        <taxon>Bacillota</taxon>
        <taxon>Bacillota incertae sedis</taxon>
        <taxon>Caldicellulosiruptorales</taxon>
        <taxon>Caldicellulosiruptoraceae</taxon>
        <taxon>Caldicellulosiruptor</taxon>
    </lineage>
</organism>
<sequence length="292" mass="33194">MANKTRWIKSRIKSVNETKKITRAMYLISASKMKRSRDRLDSTRPYFEKINEFMKDLVVHGMQTNHILFEGSYKEGQKRLGVIVISGDKGLCGGYNANVIRSTLNLYENLSNKGEVIFFPIGTVGKNFLSRHGYKVEDNFNYQTQSVSVKVAKGIAQNVVKKYYRGDIHELYIIYTKLISTIKQDVVVKKLLPLDPSEFVSGEFKKDETIRYEPSPTNVLDVVIYEYLKGIIFGAMMDSYVSELAARMTAMDNATKSADEMIQKLVLKLNRERQAVITQEISEIISGAAALK</sequence>
<evidence type="ECO:0000255" key="1">
    <source>
        <dbReference type="HAMAP-Rule" id="MF_00815"/>
    </source>
</evidence>
<proteinExistence type="inferred from homology"/>
<comment type="function">
    <text evidence="1">Produces ATP from ADP in the presence of a proton gradient across the membrane. The gamma chain is believed to be important in regulating ATPase activity and the flow of protons through the CF(0) complex.</text>
</comment>
<comment type="subunit">
    <text evidence="1">F-type ATPases have 2 components, CF(1) - the catalytic core - and CF(0) - the membrane proton channel. CF(1) has five subunits: alpha(3), beta(3), gamma(1), delta(1), epsilon(1). CF(0) has three main subunits: a, b and c.</text>
</comment>
<comment type="subcellular location">
    <subcellularLocation>
        <location evidence="1">Cell membrane</location>
        <topology evidence="1">Peripheral membrane protein</topology>
    </subcellularLocation>
</comment>
<comment type="similarity">
    <text evidence="1">Belongs to the ATPase gamma chain family.</text>
</comment>
<feature type="chain" id="PRO_1000053178" description="ATP synthase gamma chain">
    <location>
        <begin position="1"/>
        <end position="292"/>
    </location>
</feature>
<dbReference type="EMBL" id="CP000679">
    <property type="protein sequence ID" value="ABP67556.1"/>
    <property type="molecule type" value="Genomic_DNA"/>
</dbReference>
<dbReference type="RefSeq" id="WP_011917492.1">
    <property type="nucleotide sequence ID" value="NC_009437.1"/>
</dbReference>
<dbReference type="SMR" id="A4XKX1"/>
<dbReference type="STRING" id="351627.Csac_1971"/>
<dbReference type="KEGG" id="csc:Csac_1971"/>
<dbReference type="eggNOG" id="COG0224">
    <property type="taxonomic scope" value="Bacteria"/>
</dbReference>
<dbReference type="HOGENOM" id="CLU_050669_0_1_9"/>
<dbReference type="OrthoDB" id="9812769at2"/>
<dbReference type="Proteomes" id="UP000000256">
    <property type="component" value="Chromosome"/>
</dbReference>
<dbReference type="GO" id="GO:0005886">
    <property type="term" value="C:plasma membrane"/>
    <property type="evidence" value="ECO:0007669"/>
    <property type="project" value="UniProtKB-SubCell"/>
</dbReference>
<dbReference type="GO" id="GO:0045259">
    <property type="term" value="C:proton-transporting ATP synthase complex"/>
    <property type="evidence" value="ECO:0007669"/>
    <property type="project" value="UniProtKB-KW"/>
</dbReference>
<dbReference type="GO" id="GO:0005524">
    <property type="term" value="F:ATP binding"/>
    <property type="evidence" value="ECO:0007669"/>
    <property type="project" value="UniProtKB-UniRule"/>
</dbReference>
<dbReference type="GO" id="GO:0046933">
    <property type="term" value="F:proton-transporting ATP synthase activity, rotational mechanism"/>
    <property type="evidence" value="ECO:0007669"/>
    <property type="project" value="UniProtKB-UniRule"/>
</dbReference>
<dbReference type="GO" id="GO:0042777">
    <property type="term" value="P:proton motive force-driven plasma membrane ATP synthesis"/>
    <property type="evidence" value="ECO:0007669"/>
    <property type="project" value="UniProtKB-UniRule"/>
</dbReference>
<dbReference type="CDD" id="cd12151">
    <property type="entry name" value="F1-ATPase_gamma"/>
    <property type="match status" value="1"/>
</dbReference>
<dbReference type="Gene3D" id="3.40.1380.10">
    <property type="match status" value="1"/>
</dbReference>
<dbReference type="Gene3D" id="1.10.287.80">
    <property type="entry name" value="ATP synthase, gamma subunit, helix hairpin domain"/>
    <property type="match status" value="1"/>
</dbReference>
<dbReference type="HAMAP" id="MF_00815">
    <property type="entry name" value="ATP_synth_gamma_bact"/>
    <property type="match status" value="1"/>
</dbReference>
<dbReference type="InterPro" id="IPR035968">
    <property type="entry name" value="ATP_synth_F1_ATPase_gsu"/>
</dbReference>
<dbReference type="InterPro" id="IPR000131">
    <property type="entry name" value="ATP_synth_F1_gsu"/>
</dbReference>
<dbReference type="InterPro" id="IPR023632">
    <property type="entry name" value="ATP_synth_F1_gsu_CS"/>
</dbReference>
<dbReference type="NCBIfam" id="TIGR01146">
    <property type="entry name" value="ATPsyn_F1gamma"/>
    <property type="match status" value="1"/>
</dbReference>
<dbReference type="PANTHER" id="PTHR11693">
    <property type="entry name" value="ATP SYNTHASE GAMMA CHAIN"/>
    <property type="match status" value="1"/>
</dbReference>
<dbReference type="PANTHER" id="PTHR11693:SF22">
    <property type="entry name" value="ATP SYNTHASE SUBUNIT GAMMA, MITOCHONDRIAL"/>
    <property type="match status" value="1"/>
</dbReference>
<dbReference type="Pfam" id="PF00231">
    <property type="entry name" value="ATP-synt"/>
    <property type="match status" value="1"/>
</dbReference>
<dbReference type="PRINTS" id="PR00126">
    <property type="entry name" value="ATPASEGAMMA"/>
</dbReference>
<dbReference type="SUPFAM" id="SSF52943">
    <property type="entry name" value="ATP synthase (F1-ATPase), gamma subunit"/>
    <property type="match status" value="1"/>
</dbReference>
<dbReference type="PROSITE" id="PS00153">
    <property type="entry name" value="ATPASE_GAMMA"/>
    <property type="match status" value="1"/>
</dbReference>
<gene>
    <name evidence="1" type="primary">atpG</name>
    <name type="ordered locus">Csac_1971</name>
</gene>
<reference key="1">
    <citation type="submission" date="2007-04" db="EMBL/GenBank/DDBJ databases">
        <title>Genome sequence of the thermophilic hydrogen-producing bacterium Caldicellulosiruptor saccharolyticus DSM 8903.</title>
        <authorList>
            <person name="Copeland A."/>
            <person name="Lucas S."/>
            <person name="Lapidus A."/>
            <person name="Barry K."/>
            <person name="Detter J.C."/>
            <person name="Glavina del Rio T."/>
            <person name="Hammon N."/>
            <person name="Israni S."/>
            <person name="Dalin E."/>
            <person name="Tice H."/>
            <person name="Pitluck S."/>
            <person name="Kiss H."/>
            <person name="Brettin T."/>
            <person name="Bruce D."/>
            <person name="Han C."/>
            <person name="Schmutz J."/>
            <person name="Larimer F."/>
            <person name="Land M."/>
            <person name="Hauser L."/>
            <person name="Kyrpides N."/>
            <person name="Lykidis A."/>
            <person name="van de Werken H.J.G."/>
            <person name="Verhaart M.R.A."/>
            <person name="VanFossen A.L."/>
            <person name="Lewis D.L."/>
            <person name="Nichols J.D."/>
            <person name="Goorissen H.P."/>
            <person name="van Niel E.W.J."/>
            <person name="Stams F.J.M."/>
            <person name="Willquist K.U."/>
            <person name="Ward D.E."/>
            <person name="van der Oost J."/>
            <person name="Kelly R.M."/>
            <person name="Kengen S.M.W."/>
            <person name="Richardson P."/>
        </authorList>
    </citation>
    <scope>NUCLEOTIDE SEQUENCE [LARGE SCALE GENOMIC DNA]</scope>
    <source>
        <strain>ATCC 43494 / DSM 8903 / Tp8T 6331</strain>
    </source>
</reference>
<accession>A4XKX1</accession>
<name>ATPG_CALS8</name>